<comment type="function">
    <text evidence="1">Plays a role in the regulation of phosphate uptake.</text>
</comment>
<comment type="subunit">
    <text evidence="1">Homodimer.</text>
</comment>
<comment type="subcellular location">
    <subcellularLocation>
        <location evidence="1">Cytoplasm</location>
    </subcellularLocation>
</comment>
<comment type="similarity">
    <text evidence="2">Belongs to the PhoU family.</text>
</comment>
<keyword id="KW-0963">Cytoplasm</keyword>
<keyword id="KW-0592">Phosphate transport</keyword>
<keyword id="KW-0813">Transport</keyword>
<protein>
    <recommendedName>
        <fullName>Phosphate-specific transport system accessory protein PhoU homolog</fullName>
        <shortName>Pst system accessory protein PhoU homolog</shortName>
    </recommendedName>
</protein>
<organism>
    <name type="scientific">Burkholderia sp</name>
    <dbReference type="NCBI Taxonomy" id="36773"/>
    <lineage>
        <taxon>Bacteria</taxon>
        <taxon>Pseudomonadati</taxon>
        <taxon>Pseudomonadota</taxon>
        <taxon>Betaproteobacteria</taxon>
        <taxon>Burkholderiales</taxon>
        <taxon>Burkholderiaceae</taxon>
        <taxon>Burkholderia</taxon>
    </lineage>
</organism>
<evidence type="ECO:0000250" key="1"/>
<evidence type="ECO:0000305" key="2"/>
<accession>Q9XBG0</accession>
<dbReference type="EMBL" id="AJ132617">
    <property type="protein sequence ID" value="CAB41943.1"/>
    <property type="molecule type" value="Genomic_DNA"/>
</dbReference>
<dbReference type="SMR" id="Q9XBG0"/>
<dbReference type="GO" id="GO:0005737">
    <property type="term" value="C:cytoplasm"/>
    <property type="evidence" value="ECO:0000250"/>
    <property type="project" value="UniProtKB"/>
</dbReference>
<dbReference type="GO" id="GO:0042803">
    <property type="term" value="F:protein homodimerization activity"/>
    <property type="evidence" value="ECO:0000250"/>
    <property type="project" value="UniProtKB"/>
</dbReference>
<dbReference type="GO" id="GO:0030643">
    <property type="term" value="P:intracellular phosphate ion homeostasis"/>
    <property type="evidence" value="ECO:0007669"/>
    <property type="project" value="InterPro"/>
</dbReference>
<dbReference type="GO" id="GO:0045936">
    <property type="term" value="P:negative regulation of phosphate metabolic process"/>
    <property type="evidence" value="ECO:0000250"/>
    <property type="project" value="UniProtKB"/>
</dbReference>
<dbReference type="GO" id="GO:2000186">
    <property type="term" value="P:negative regulation of phosphate transmembrane transport"/>
    <property type="evidence" value="ECO:0000250"/>
    <property type="project" value="UniProtKB"/>
</dbReference>
<dbReference type="GO" id="GO:0006817">
    <property type="term" value="P:phosphate ion transport"/>
    <property type="evidence" value="ECO:0007669"/>
    <property type="project" value="UniProtKB-KW"/>
</dbReference>
<dbReference type="FunFam" id="1.20.58.220:FF:000004">
    <property type="entry name" value="Phosphate-specific transport system accessory protein PhoU"/>
    <property type="match status" value="1"/>
</dbReference>
<dbReference type="Gene3D" id="1.20.58.220">
    <property type="entry name" value="Phosphate transport system protein phou homolog 2, domain 2"/>
    <property type="match status" value="1"/>
</dbReference>
<dbReference type="InterPro" id="IPR028366">
    <property type="entry name" value="P_transport_PhoU"/>
</dbReference>
<dbReference type="InterPro" id="IPR038078">
    <property type="entry name" value="PhoU-like_sf"/>
</dbReference>
<dbReference type="InterPro" id="IPR026022">
    <property type="entry name" value="PhoU_dom"/>
</dbReference>
<dbReference type="NCBIfam" id="TIGR02135">
    <property type="entry name" value="phoU_full"/>
    <property type="match status" value="1"/>
</dbReference>
<dbReference type="PANTHER" id="PTHR42930">
    <property type="entry name" value="PHOSPHATE-SPECIFIC TRANSPORT SYSTEM ACCESSORY PROTEIN PHOU"/>
    <property type="match status" value="1"/>
</dbReference>
<dbReference type="PANTHER" id="PTHR42930:SF3">
    <property type="entry name" value="PHOSPHATE-SPECIFIC TRANSPORT SYSTEM ACCESSORY PROTEIN PHOU"/>
    <property type="match status" value="1"/>
</dbReference>
<dbReference type="Pfam" id="PF01895">
    <property type="entry name" value="PhoU"/>
    <property type="match status" value="2"/>
</dbReference>
<dbReference type="PIRSF" id="PIRSF003107">
    <property type="entry name" value="PhoU"/>
    <property type="match status" value="1"/>
</dbReference>
<dbReference type="SUPFAM" id="SSF109755">
    <property type="entry name" value="PhoU-like"/>
    <property type="match status" value="1"/>
</dbReference>
<feature type="chain" id="PRO_0000155165" description="Phosphate-specific transport system accessory protein PhoU homolog">
    <location>
        <begin position="1"/>
        <end position="235"/>
    </location>
</feature>
<reference key="1">
    <citation type="journal article" date="1999" name="J. Bacteriol.">
        <title>Identification of a putative P-transporter operon in the genome of a Burkholderia strain living inside the arbuscular mycorrhizal fungus Gigaspora margarita.</title>
        <authorList>
            <person name="Ruiz-Lozano J."/>
            <person name="Bonfante P."/>
        </authorList>
    </citation>
    <scope>NUCLEOTIDE SEQUENCE [GENOMIC DNA]</scope>
</reference>
<name>PHOU_BURSP</name>
<proteinExistence type="inferred from homology"/>
<sequence length="235" mass="26168">MIDKHLSSQFDADLESVCAQMLEMGRLVKMQVTDAMDALNHLDAQAAQRVMRNEQRINTLEIDIDQECSNIIVRRQPAARDLRLLMAISKIITDLERVGDEAEKIAVCTQRLTQAGAQPHLMDGSALKQAGAMAISMLHRALESFMHLDTAATAQIVRDDCVINEAFHAFVRTLITYMKEDTQMISTGLDYLSAAKAIERIGDHATNLAEFTIYIVKGTDVRHISPEQLAQEALC</sequence>
<gene>
    <name type="primary">phoU</name>
</gene>